<sequence length="322" mass="36764">MSSEQVKDRAKAAIVGSLVADAATQPVHWVEDPNRLNEQLRNKSEPEFSSEWLNPRYRYDNGTFSIYGEQNYVLLKHLVENKGFNLKKYMDAYYRHFGPGTNYDQPQSRDRLPKQGPWRNEHITRALNKIQSGDQRSGTDVAECDSYAMITPLVAMYAGSGQLDSYVDHVVRVTLNNDRSVRTAQFFAKLLEHYILHGRDPEGFHKVLSHFPNDQYKRDWQTAYEERSMCNVDAVRKYGYGSSLPGNFQGALNCLTRNEDYVSSVRTTMRSGGCSAARSCGVGAWVAAQYGSQCIPSNWISRTLRGREVLEYASQIIRMMKR</sequence>
<protein>
    <recommendedName>
        <fullName>Crystallin J1B</fullName>
    </recommendedName>
</protein>
<keyword id="KW-0903">Direct protein sequencing</keyword>
<keyword id="KW-0273">Eye lens protein</keyword>
<reference key="1">
    <citation type="journal article" date="1993" name="J. Biol. Chem.">
        <title>J1-crystallins of the cubomedusan jellyfish lens constitute a novel family encoded in at least three intronless genes.</title>
        <authorList>
            <person name="Piatigorsky J."/>
            <person name="Horwitz J."/>
            <person name="Norman B.L."/>
        </authorList>
    </citation>
    <scope>NUCLEOTIDE SEQUENCE [GENOMIC DNA]</scope>
    <scope>PARTIAL PROTEIN SEQUENCE</scope>
    <source>
        <tissue>Lens</tissue>
    </source>
</reference>
<organism>
    <name type="scientific">Tripedalia cystophora</name>
    <name type="common">Jellyfish</name>
    <dbReference type="NCBI Taxonomy" id="6141"/>
    <lineage>
        <taxon>Eukaryota</taxon>
        <taxon>Metazoa</taxon>
        <taxon>Cnidaria</taxon>
        <taxon>Cubozoa</taxon>
        <taxon>Carybdeida</taxon>
        <taxon>Tripedaliidae</taxon>
        <taxon>Tripedalia</taxon>
    </lineage>
</organism>
<comment type="tissue specificity">
    <text>Expressed in the rhopalia. Present in both the large and small eyes.</text>
</comment>
<comment type="similarity">
    <text evidence="1">Belongs to the ADP-ribosylglycohydrolase family. J1 crystallin subfamily.</text>
</comment>
<accession>Q03443</accession>
<feature type="chain" id="PRO_0000157291" description="Crystallin J1B">
    <location>
        <begin position="1"/>
        <end position="322"/>
    </location>
</feature>
<evidence type="ECO:0000305" key="1"/>
<proteinExistence type="evidence at protein level"/>
<dbReference type="EMBL" id="L05523">
    <property type="protein sequence ID" value="AAA30107.1"/>
    <property type="molecule type" value="Genomic_DNA"/>
</dbReference>
<dbReference type="PIR" id="B46745">
    <property type="entry name" value="B46745"/>
</dbReference>
<dbReference type="SMR" id="Q03443"/>
<dbReference type="GO" id="GO:0005212">
    <property type="term" value="F:structural constituent of eye lens"/>
    <property type="evidence" value="ECO:0007669"/>
    <property type="project" value="UniProtKB-KW"/>
</dbReference>
<dbReference type="Gene3D" id="1.10.4080.10">
    <property type="entry name" value="ADP-ribosylation/Crystallin J1"/>
    <property type="match status" value="1"/>
</dbReference>
<dbReference type="InterPro" id="IPR050792">
    <property type="entry name" value="ADP-ribosylglycohydrolase"/>
</dbReference>
<dbReference type="InterPro" id="IPR005502">
    <property type="entry name" value="Ribosyl_crysJ1"/>
</dbReference>
<dbReference type="InterPro" id="IPR036705">
    <property type="entry name" value="Ribosyl_crysJ1_sf"/>
</dbReference>
<dbReference type="PANTHER" id="PTHR16222">
    <property type="entry name" value="ADP-RIBOSYLGLYCOHYDROLASE"/>
    <property type="match status" value="1"/>
</dbReference>
<dbReference type="PANTHER" id="PTHR16222:SF17">
    <property type="entry name" value="SELENOPROTEIN J"/>
    <property type="match status" value="1"/>
</dbReference>
<dbReference type="Pfam" id="PF03747">
    <property type="entry name" value="ADP_ribosyl_GH"/>
    <property type="match status" value="1"/>
</dbReference>
<dbReference type="SUPFAM" id="SSF101478">
    <property type="entry name" value="ADP-ribosylglycohydrolase"/>
    <property type="match status" value="1"/>
</dbReference>
<name>CRJ1B_TRICY</name>